<dbReference type="EMBL" id="AF416587">
    <property type="protein sequence ID" value="AAL09026.1"/>
    <property type="molecule type" value="Genomic_DNA"/>
</dbReference>
<dbReference type="SMR" id="Q95VF0"/>
<dbReference type="GO" id="GO:0005550">
    <property type="term" value="F:pheromone binding"/>
    <property type="evidence" value="ECO:0000304"/>
    <property type="project" value="UniProtKB"/>
</dbReference>
<dbReference type="GO" id="GO:0019236">
    <property type="term" value="P:response to pheromone"/>
    <property type="evidence" value="ECO:0007669"/>
    <property type="project" value="UniProtKB-KW"/>
</dbReference>
<dbReference type="CDD" id="cd23992">
    <property type="entry name" value="PBP_GOBP"/>
    <property type="match status" value="1"/>
</dbReference>
<dbReference type="FunFam" id="1.10.238.20:FF:000018">
    <property type="entry name" value="General odorant-binding protein 1"/>
    <property type="match status" value="1"/>
</dbReference>
<dbReference type="Gene3D" id="1.10.238.20">
    <property type="entry name" value="Pheromone/general odorant binding protein domain"/>
    <property type="match status" value="1"/>
</dbReference>
<dbReference type="InterPro" id="IPR006072">
    <property type="entry name" value="Odorant/phero-bd_Lep"/>
</dbReference>
<dbReference type="InterPro" id="IPR006170">
    <property type="entry name" value="PBP/GOBP"/>
</dbReference>
<dbReference type="InterPro" id="IPR036728">
    <property type="entry name" value="PBP_GOBP_sf"/>
</dbReference>
<dbReference type="Pfam" id="PF01395">
    <property type="entry name" value="PBP_GOBP"/>
    <property type="match status" value="1"/>
</dbReference>
<dbReference type="PIRSF" id="PIRSF015604">
    <property type="entry name" value="Odorant/phero_bd"/>
    <property type="match status" value="1"/>
</dbReference>
<dbReference type="PRINTS" id="PR00484">
    <property type="entry name" value="PBPGOBP"/>
</dbReference>
<dbReference type="SMART" id="SM00708">
    <property type="entry name" value="PhBP"/>
    <property type="match status" value="1"/>
</dbReference>
<dbReference type="SUPFAM" id="SSF47565">
    <property type="entry name" value="Insect pheromone/odorant-binding proteins"/>
    <property type="match status" value="1"/>
</dbReference>
<keyword id="KW-0903">Direct protein sequencing</keyword>
<keyword id="KW-1015">Disulfide bond</keyword>
<keyword id="KW-0589">Pheromone response</keyword>
<keyword id="KW-0590">Pheromone-binding</keyword>
<keyword id="KW-0732">Signal</keyword>
<keyword id="KW-0813">Transport</keyword>
<gene>
    <name type="primary">PBP</name>
</gene>
<comment type="function">
    <text evidence="1">This major soluble protein in olfactory sensilla of male moths serves to solubilize the extremely hydrophobic pheromone molecules such as bombykol and to transport pheromone through the aqueous lymph to receptors located on olfactory cilia.</text>
</comment>
<comment type="subunit">
    <text evidence="3">Monomer and disulfide-linked dimers.</text>
</comment>
<comment type="tissue specificity">
    <text evidence="3">Antenna.</text>
</comment>
<comment type="mass spectrometry" mass="15684.0" method="MALDI" evidence="3"/>
<comment type="polymorphism">
    <text evidence="2">2 electrophoretic alleles are known: fast and slow. The isoform shown here is the fast form.</text>
</comment>
<comment type="similarity">
    <text evidence="4">Belongs to the PBP/GOBP family.</text>
</comment>
<feature type="signal peptide" evidence="3">
    <location>
        <begin position="1"/>
        <end position="23"/>
    </location>
</feature>
<feature type="chain" id="PRO_0000012561" description="Pheromone-binding protein 2">
    <location>
        <begin position="24"/>
        <end position="164"/>
    </location>
</feature>
<feature type="disulfide bond" evidence="1">
    <location>
        <begin position="42"/>
        <end position="77"/>
    </location>
</feature>
<feature type="disulfide bond" evidence="1">
    <location>
        <begin position="73"/>
        <end position="130"/>
    </location>
</feature>
<feature type="disulfide bond" evidence="1">
    <location>
        <begin position="119"/>
        <end position="139"/>
    </location>
</feature>
<feature type="sequence variant" evidence="3">
    <original>S</original>
    <variation>A</variation>
    <location>
        <position position="54"/>
    </location>
</feature>
<feature type="sequence variant" evidence="3">
    <original>D</original>
    <variation>E</variation>
    <location>
        <position position="87"/>
    </location>
</feature>
<feature type="sequence variant" evidence="3">
    <original>A</original>
    <variation>T</variation>
    <location>
        <position position="122"/>
    </location>
</feature>
<organism evidence="5">
    <name type="scientific">Epiphyas postvittana</name>
    <name type="common">Light brown apple moth</name>
    <dbReference type="NCBI Taxonomy" id="65032"/>
    <lineage>
        <taxon>Eukaryota</taxon>
        <taxon>Metazoa</taxon>
        <taxon>Ecdysozoa</taxon>
        <taxon>Arthropoda</taxon>
        <taxon>Hexapoda</taxon>
        <taxon>Insecta</taxon>
        <taxon>Pterygota</taxon>
        <taxon>Neoptera</taxon>
        <taxon>Endopterygota</taxon>
        <taxon>Lepidoptera</taxon>
        <taxon>Glossata</taxon>
        <taxon>Ditrysia</taxon>
        <taxon>Tortricoidea</taxon>
        <taxon>Tortricidae</taxon>
        <taxon>Tortricinae</taxon>
        <taxon>Epiphyas</taxon>
    </lineage>
</organism>
<protein>
    <recommendedName>
        <fullName>Pheromone-binding protein 2</fullName>
        <shortName>PBP 2</shortName>
    </recommendedName>
</protein>
<proteinExistence type="evidence at protein level"/>
<reference evidence="4" key="1">
    <citation type="journal article" date="2002" name="Insect Biochem. Mol. Biol.">
        <title>Pheromone binding proteins of Epiphyas postvittana (Lepidoptera: Tortricidae) are encoded at a single locus.</title>
        <authorList>
            <person name="Newcomb R.D."/>
            <person name="Sirey T.M."/>
            <person name="Rassam M."/>
            <person name="Greenwood D.R."/>
        </authorList>
    </citation>
    <scope>NUCLEOTIDE SEQUENCE [GENOMIC DNA]</scope>
    <scope>PROTEIN SEQUENCE OF 24-35</scope>
    <scope>SUBUNIT</scope>
    <scope>TISSUE SPECIFICITY</scope>
    <scope>MASS SPECTROMETRY</scope>
    <scope>POLYMORPHISM</scope>
    <source>
        <tissue>Antenna</tissue>
    </source>
</reference>
<sequence length="164" mass="18315">MMNHKELVLFAVVCLSLYQAVEPSQDVVKDMSLNFRKGLDACKKELNLPDTINSDFNRFWNDDHVVTNRDTGCAIMCLSSKLELVSDTGLHHGNTLEYAKQHGADDTVAQQIVDLLHSCAQAVPDLEDPCLKVLEWAKCFKAEIHKLNWAPSAEVMAAEMLAEV</sequence>
<evidence type="ECO:0000250" key="1"/>
<evidence type="ECO:0000250" key="2">
    <source>
        <dbReference type="UniProtKB" id="P34174"/>
    </source>
</evidence>
<evidence type="ECO:0000269" key="3">
    <source>
    </source>
</evidence>
<evidence type="ECO:0000305" key="4"/>
<evidence type="ECO:0000312" key="5">
    <source>
        <dbReference type="EMBL" id="AAL09026.1"/>
    </source>
</evidence>
<accession>Q95VF0</accession>
<name>PBP2_EPIPO</name>